<proteinExistence type="inferred from homology"/>
<dbReference type="EMBL" id="CP001055">
    <property type="protein sequence ID" value="ACC97702.1"/>
    <property type="molecule type" value="Genomic_DNA"/>
</dbReference>
<dbReference type="RefSeq" id="WP_012414317.1">
    <property type="nucleotide sequence ID" value="NC_010644.1"/>
</dbReference>
<dbReference type="SMR" id="B2KBL5"/>
<dbReference type="STRING" id="445932.Emin_0136"/>
<dbReference type="KEGG" id="emi:Emin_0136"/>
<dbReference type="HOGENOM" id="CLU_099839_1_0_0"/>
<dbReference type="OrthoDB" id="9801447at2"/>
<dbReference type="Proteomes" id="UP000001029">
    <property type="component" value="Chromosome"/>
</dbReference>
<dbReference type="GO" id="GO:0005829">
    <property type="term" value="C:cytosol"/>
    <property type="evidence" value="ECO:0007669"/>
    <property type="project" value="TreeGrafter"/>
</dbReference>
<dbReference type="GO" id="GO:0000166">
    <property type="term" value="F:nucleotide binding"/>
    <property type="evidence" value="ECO:0007669"/>
    <property type="project" value="TreeGrafter"/>
</dbReference>
<dbReference type="CDD" id="cd11740">
    <property type="entry name" value="YajQ_like"/>
    <property type="match status" value="1"/>
</dbReference>
<dbReference type="Gene3D" id="3.30.70.860">
    <property type="match status" value="1"/>
</dbReference>
<dbReference type="Gene3D" id="3.30.70.990">
    <property type="entry name" value="YajQ-like, domain 2"/>
    <property type="match status" value="1"/>
</dbReference>
<dbReference type="HAMAP" id="MF_00632">
    <property type="entry name" value="YajQ"/>
    <property type="match status" value="1"/>
</dbReference>
<dbReference type="InterPro" id="IPR007551">
    <property type="entry name" value="DUF520"/>
</dbReference>
<dbReference type="InterPro" id="IPR035571">
    <property type="entry name" value="UPF0234-like_C"/>
</dbReference>
<dbReference type="InterPro" id="IPR035570">
    <property type="entry name" value="UPF0234_N"/>
</dbReference>
<dbReference type="InterPro" id="IPR036183">
    <property type="entry name" value="YajQ-like_sf"/>
</dbReference>
<dbReference type="NCBIfam" id="NF003819">
    <property type="entry name" value="PRK05412.1"/>
    <property type="match status" value="1"/>
</dbReference>
<dbReference type="PANTHER" id="PTHR30476">
    <property type="entry name" value="UPF0234 PROTEIN YAJQ"/>
    <property type="match status" value="1"/>
</dbReference>
<dbReference type="PANTHER" id="PTHR30476:SF0">
    <property type="entry name" value="UPF0234 PROTEIN YAJQ"/>
    <property type="match status" value="1"/>
</dbReference>
<dbReference type="Pfam" id="PF04461">
    <property type="entry name" value="DUF520"/>
    <property type="match status" value="1"/>
</dbReference>
<dbReference type="SUPFAM" id="SSF89963">
    <property type="entry name" value="YajQ-like"/>
    <property type="match status" value="2"/>
</dbReference>
<feature type="chain" id="PRO_1000130625" description="Nucleotide-binding protein Emin_0136">
    <location>
        <begin position="1"/>
        <end position="164"/>
    </location>
</feature>
<sequence length="164" mass="18248">MADYSFDIVSKVDTNLIEESISVALKEITNRYDFKDSNSSMELNTKDNEIKLSSADDFKVKSLYDILLTRLSKRGISLKNFQPGKIESALGGTAKQSVKIQQGIPADKAKEIVRIIKDAKIKVNASIQGDQLRVTSKSKDDLQATMALLKGKDLGLDLQFTNYR</sequence>
<keyword id="KW-0547">Nucleotide-binding</keyword>
<keyword id="KW-1185">Reference proteome</keyword>
<accession>B2KBL5</accession>
<protein>
    <recommendedName>
        <fullName evidence="1">Nucleotide-binding protein Emin_0136</fullName>
    </recommendedName>
</protein>
<comment type="function">
    <text evidence="1">Nucleotide-binding protein.</text>
</comment>
<comment type="similarity">
    <text evidence="1">Belongs to the YajQ family.</text>
</comment>
<reference key="1">
    <citation type="journal article" date="2009" name="Appl. Environ. Microbiol.">
        <title>Genomic analysis of 'Elusimicrobium minutum,' the first cultivated representative of the phylum 'Elusimicrobia' (formerly termite group 1).</title>
        <authorList>
            <person name="Herlemann D.P.R."/>
            <person name="Geissinger O."/>
            <person name="Ikeda-Ohtsubo W."/>
            <person name="Kunin V."/>
            <person name="Sun H."/>
            <person name="Lapidus A."/>
            <person name="Hugenholtz P."/>
            <person name="Brune A."/>
        </authorList>
    </citation>
    <scope>NUCLEOTIDE SEQUENCE [LARGE SCALE GENOMIC DNA]</scope>
    <source>
        <strain>Pei191</strain>
    </source>
</reference>
<evidence type="ECO:0000255" key="1">
    <source>
        <dbReference type="HAMAP-Rule" id="MF_00632"/>
    </source>
</evidence>
<name>Y136_ELUMP</name>
<gene>
    <name type="ordered locus">Emin_0136</name>
</gene>
<organism>
    <name type="scientific">Elusimicrobium minutum (strain Pei191)</name>
    <dbReference type="NCBI Taxonomy" id="445932"/>
    <lineage>
        <taxon>Bacteria</taxon>
        <taxon>Pseudomonadati</taxon>
        <taxon>Elusimicrobiota</taxon>
        <taxon>Elusimicrobia</taxon>
        <taxon>Elusimicrobiales</taxon>
        <taxon>Elusimicrobiaceae</taxon>
        <taxon>Elusimicrobium</taxon>
    </lineage>
</organism>